<name>RL34_COREF</name>
<reference key="1">
    <citation type="journal article" date="2003" name="Genome Res.">
        <title>Comparative complete genome sequence analysis of the amino acid replacements responsible for the thermostability of Corynebacterium efficiens.</title>
        <authorList>
            <person name="Nishio Y."/>
            <person name="Nakamura Y."/>
            <person name="Kawarabayasi Y."/>
            <person name="Usuda Y."/>
            <person name="Kimura E."/>
            <person name="Sugimoto S."/>
            <person name="Matsui K."/>
            <person name="Yamagishi A."/>
            <person name="Kikuchi H."/>
            <person name="Ikeo K."/>
            <person name="Gojobori T."/>
        </authorList>
    </citation>
    <scope>NUCLEOTIDE SEQUENCE [LARGE SCALE GENOMIC DNA]</scope>
    <source>
        <strain>DSM 44549 / YS-314 / AJ 12310 / JCM 11189 / NBRC 100395</strain>
    </source>
</reference>
<sequence length="47" mass="5549">MAKGKRTFQPNNRRRARVHGFRTRMRTRAGRAIVAARRRKGREKLTA</sequence>
<dbReference type="EMBL" id="BA000035">
    <property type="protein sequence ID" value="BAC19757.1"/>
    <property type="molecule type" value="Genomic_DNA"/>
</dbReference>
<dbReference type="SMR" id="Q8FSU7"/>
<dbReference type="STRING" id="196164.gene:10743397"/>
<dbReference type="KEGG" id="cef:CE2947"/>
<dbReference type="eggNOG" id="COG0230">
    <property type="taxonomic scope" value="Bacteria"/>
</dbReference>
<dbReference type="HOGENOM" id="CLU_129938_2_1_11"/>
<dbReference type="Proteomes" id="UP000001409">
    <property type="component" value="Chromosome"/>
</dbReference>
<dbReference type="GO" id="GO:1990904">
    <property type="term" value="C:ribonucleoprotein complex"/>
    <property type="evidence" value="ECO:0007669"/>
    <property type="project" value="UniProtKB-KW"/>
</dbReference>
<dbReference type="GO" id="GO:0005840">
    <property type="term" value="C:ribosome"/>
    <property type="evidence" value="ECO:0007669"/>
    <property type="project" value="UniProtKB-KW"/>
</dbReference>
<dbReference type="GO" id="GO:0003735">
    <property type="term" value="F:structural constituent of ribosome"/>
    <property type="evidence" value="ECO:0007669"/>
    <property type="project" value="InterPro"/>
</dbReference>
<dbReference type="GO" id="GO:0006412">
    <property type="term" value="P:translation"/>
    <property type="evidence" value="ECO:0007669"/>
    <property type="project" value="UniProtKB-UniRule"/>
</dbReference>
<dbReference type="FunFam" id="1.10.287.3980:FF:000001">
    <property type="entry name" value="Mitochondrial ribosomal protein L34"/>
    <property type="match status" value="1"/>
</dbReference>
<dbReference type="Gene3D" id="1.10.287.3980">
    <property type="match status" value="1"/>
</dbReference>
<dbReference type="HAMAP" id="MF_00391">
    <property type="entry name" value="Ribosomal_bL34"/>
    <property type="match status" value="1"/>
</dbReference>
<dbReference type="InterPro" id="IPR000271">
    <property type="entry name" value="Ribosomal_bL34"/>
</dbReference>
<dbReference type="InterPro" id="IPR020939">
    <property type="entry name" value="Ribosomal_bL34_CS"/>
</dbReference>
<dbReference type="NCBIfam" id="TIGR01030">
    <property type="entry name" value="rpmH_bact"/>
    <property type="match status" value="1"/>
</dbReference>
<dbReference type="PANTHER" id="PTHR14503:SF4">
    <property type="entry name" value="LARGE RIBOSOMAL SUBUNIT PROTEIN BL34M"/>
    <property type="match status" value="1"/>
</dbReference>
<dbReference type="PANTHER" id="PTHR14503">
    <property type="entry name" value="MITOCHONDRIAL RIBOSOMAL PROTEIN 34 FAMILY MEMBER"/>
    <property type="match status" value="1"/>
</dbReference>
<dbReference type="Pfam" id="PF00468">
    <property type="entry name" value="Ribosomal_L34"/>
    <property type="match status" value="1"/>
</dbReference>
<dbReference type="PROSITE" id="PS00784">
    <property type="entry name" value="RIBOSOMAL_L34"/>
    <property type="match status" value="1"/>
</dbReference>
<gene>
    <name evidence="1" type="primary">rpmH</name>
    <name type="ordered locus">CE2947</name>
</gene>
<protein>
    <recommendedName>
        <fullName evidence="1">Large ribosomal subunit protein bL34</fullName>
    </recommendedName>
    <alternativeName>
        <fullName evidence="3">50S ribosomal protein L34</fullName>
    </alternativeName>
</protein>
<proteinExistence type="inferred from homology"/>
<comment type="similarity">
    <text evidence="1">Belongs to the bacterial ribosomal protein bL34 family.</text>
</comment>
<feature type="chain" id="PRO_0000187372" description="Large ribosomal subunit protein bL34">
    <location>
        <begin position="1"/>
        <end position="47"/>
    </location>
</feature>
<feature type="region of interest" description="Disordered" evidence="2">
    <location>
        <begin position="1"/>
        <end position="28"/>
    </location>
</feature>
<accession>Q8FSU7</accession>
<keyword id="KW-1185">Reference proteome</keyword>
<keyword id="KW-0687">Ribonucleoprotein</keyword>
<keyword id="KW-0689">Ribosomal protein</keyword>
<organism>
    <name type="scientific">Corynebacterium efficiens (strain DSM 44549 / YS-314 / AJ 12310 / JCM 11189 / NBRC 100395)</name>
    <dbReference type="NCBI Taxonomy" id="196164"/>
    <lineage>
        <taxon>Bacteria</taxon>
        <taxon>Bacillati</taxon>
        <taxon>Actinomycetota</taxon>
        <taxon>Actinomycetes</taxon>
        <taxon>Mycobacteriales</taxon>
        <taxon>Corynebacteriaceae</taxon>
        <taxon>Corynebacterium</taxon>
    </lineage>
</organism>
<evidence type="ECO:0000255" key="1">
    <source>
        <dbReference type="HAMAP-Rule" id="MF_00391"/>
    </source>
</evidence>
<evidence type="ECO:0000256" key="2">
    <source>
        <dbReference type="SAM" id="MobiDB-lite"/>
    </source>
</evidence>
<evidence type="ECO:0000305" key="3"/>